<protein>
    <recommendedName>
        <fullName evidence="1">Large ribosomal subunit protein uL15</fullName>
    </recommendedName>
    <alternativeName>
        <fullName evidence="3">50S ribosomal protein L15</fullName>
    </alternativeName>
</protein>
<name>RL15_BIFAA</name>
<keyword id="KW-1185">Reference proteome</keyword>
<keyword id="KW-0687">Ribonucleoprotein</keyword>
<keyword id="KW-0689">Ribosomal protein</keyword>
<keyword id="KW-0694">RNA-binding</keyword>
<keyword id="KW-0699">rRNA-binding</keyword>
<feature type="chain" id="PRO_1000054429" description="Large ribosomal subunit protein uL15">
    <location>
        <begin position="1"/>
        <end position="148"/>
    </location>
</feature>
<feature type="region of interest" description="Disordered" evidence="2">
    <location>
        <begin position="1"/>
        <end position="47"/>
    </location>
</feature>
<feature type="compositionally biased region" description="Basic and acidic residues" evidence="2">
    <location>
        <begin position="1"/>
        <end position="40"/>
    </location>
</feature>
<dbReference type="EMBL" id="AP009256">
    <property type="protein sequence ID" value="BAF39121.1"/>
    <property type="molecule type" value="Genomic_DNA"/>
</dbReference>
<dbReference type="RefSeq" id="WP_003808057.1">
    <property type="nucleotide sequence ID" value="NZ_CAXVKE010000001.1"/>
</dbReference>
<dbReference type="SMR" id="A1A088"/>
<dbReference type="STRING" id="367928.BAD_0340"/>
<dbReference type="PaxDb" id="1680-BADO_0347"/>
<dbReference type="GeneID" id="4556488"/>
<dbReference type="KEGG" id="bad:BAD_0340"/>
<dbReference type="HOGENOM" id="CLU_055188_4_1_11"/>
<dbReference type="Proteomes" id="UP000008702">
    <property type="component" value="Chromosome"/>
</dbReference>
<dbReference type="GO" id="GO:0022625">
    <property type="term" value="C:cytosolic large ribosomal subunit"/>
    <property type="evidence" value="ECO:0007669"/>
    <property type="project" value="TreeGrafter"/>
</dbReference>
<dbReference type="GO" id="GO:0019843">
    <property type="term" value="F:rRNA binding"/>
    <property type="evidence" value="ECO:0007669"/>
    <property type="project" value="UniProtKB-UniRule"/>
</dbReference>
<dbReference type="GO" id="GO:0003735">
    <property type="term" value="F:structural constituent of ribosome"/>
    <property type="evidence" value="ECO:0007669"/>
    <property type="project" value="InterPro"/>
</dbReference>
<dbReference type="GO" id="GO:0006412">
    <property type="term" value="P:translation"/>
    <property type="evidence" value="ECO:0007669"/>
    <property type="project" value="UniProtKB-UniRule"/>
</dbReference>
<dbReference type="Gene3D" id="3.100.10.10">
    <property type="match status" value="1"/>
</dbReference>
<dbReference type="HAMAP" id="MF_01341">
    <property type="entry name" value="Ribosomal_uL15"/>
    <property type="match status" value="1"/>
</dbReference>
<dbReference type="InterPro" id="IPR030878">
    <property type="entry name" value="Ribosomal_uL15"/>
</dbReference>
<dbReference type="InterPro" id="IPR021131">
    <property type="entry name" value="Ribosomal_uL15/eL18"/>
</dbReference>
<dbReference type="InterPro" id="IPR036227">
    <property type="entry name" value="Ribosomal_uL15/eL18_sf"/>
</dbReference>
<dbReference type="InterPro" id="IPR005749">
    <property type="entry name" value="Ribosomal_uL15_bac-type"/>
</dbReference>
<dbReference type="NCBIfam" id="TIGR01071">
    <property type="entry name" value="rplO_bact"/>
    <property type="match status" value="1"/>
</dbReference>
<dbReference type="PANTHER" id="PTHR12934">
    <property type="entry name" value="50S RIBOSOMAL PROTEIN L15"/>
    <property type="match status" value="1"/>
</dbReference>
<dbReference type="PANTHER" id="PTHR12934:SF11">
    <property type="entry name" value="LARGE RIBOSOMAL SUBUNIT PROTEIN UL15M"/>
    <property type="match status" value="1"/>
</dbReference>
<dbReference type="Pfam" id="PF00828">
    <property type="entry name" value="Ribosomal_L27A"/>
    <property type="match status" value="1"/>
</dbReference>
<dbReference type="SUPFAM" id="SSF52080">
    <property type="entry name" value="Ribosomal proteins L15p and L18e"/>
    <property type="match status" value="1"/>
</dbReference>
<evidence type="ECO:0000255" key="1">
    <source>
        <dbReference type="HAMAP-Rule" id="MF_01341"/>
    </source>
</evidence>
<evidence type="ECO:0000256" key="2">
    <source>
        <dbReference type="SAM" id="MobiDB-lite"/>
    </source>
</evidence>
<evidence type="ECO:0000305" key="3"/>
<proteinExistence type="inferred from homology"/>
<gene>
    <name evidence="1" type="primary">rplO</name>
    <name type="ordered locus">BAD_0340</name>
</gene>
<reference key="1">
    <citation type="submission" date="2006-12" db="EMBL/GenBank/DDBJ databases">
        <title>Bifidobacterium adolescentis complete genome sequence.</title>
        <authorList>
            <person name="Suzuki T."/>
            <person name="Tsuda Y."/>
            <person name="Kanou N."/>
            <person name="Inoue T."/>
            <person name="Kumazaki K."/>
            <person name="Nagano S."/>
            <person name="Hirai S."/>
            <person name="Tanaka K."/>
            <person name="Watanabe K."/>
        </authorList>
    </citation>
    <scope>NUCLEOTIDE SEQUENCE [LARGE SCALE GENOMIC DNA]</scope>
    <source>
        <strain>ATCC 15703 / DSM 20083 / NCTC 11814 / E194a</strain>
    </source>
</reference>
<accession>A1A088</accession>
<comment type="function">
    <text evidence="1">Binds to the 23S rRNA.</text>
</comment>
<comment type="subunit">
    <text evidence="1">Part of the 50S ribosomal subunit.</text>
</comment>
<comment type="similarity">
    <text evidence="1">Belongs to the universal ribosomal protein uL15 family.</text>
</comment>
<organism>
    <name type="scientific">Bifidobacterium adolescentis (strain ATCC 15703 / DSM 20083 / NCTC 11814 / E194a)</name>
    <dbReference type="NCBI Taxonomy" id="367928"/>
    <lineage>
        <taxon>Bacteria</taxon>
        <taxon>Bacillati</taxon>
        <taxon>Actinomycetota</taxon>
        <taxon>Actinomycetes</taxon>
        <taxon>Bifidobacteriales</taxon>
        <taxon>Bifidobacteriaceae</taxon>
        <taxon>Bifidobacterium</taxon>
    </lineage>
</organism>
<sequence>MADILQMHDLKPAPGANKDRIRVGRGEGSKGKTSGRGDKGTKKRYQVRPGFEGGQLPLYMRLPKLRGFKNPFKKEYQVVNVAVLAELFPQGGEITVADLVAKGAVRNGFPVKVLGDGEVSAAYTLKGVKASASAKSKIEAAGGSISED</sequence>